<name>RF1_BACTN</name>
<organism>
    <name type="scientific">Bacteroides thetaiotaomicron (strain ATCC 29148 / DSM 2079 / JCM 5827 / CCUG 10774 / NCTC 10582 / VPI-5482 / E50)</name>
    <dbReference type="NCBI Taxonomy" id="226186"/>
    <lineage>
        <taxon>Bacteria</taxon>
        <taxon>Pseudomonadati</taxon>
        <taxon>Bacteroidota</taxon>
        <taxon>Bacteroidia</taxon>
        <taxon>Bacteroidales</taxon>
        <taxon>Bacteroidaceae</taxon>
        <taxon>Bacteroides</taxon>
    </lineage>
</organism>
<comment type="function">
    <text evidence="1">Peptide chain release factor 1 directs the termination of translation in response to the peptide chain termination codons UAG and UAA.</text>
</comment>
<comment type="subcellular location">
    <subcellularLocation>
        <location evidence="1">Cytoplasm</location>
    </subcellularLocation>
</comment>
<comment type="PTM">
    <text evidence="1">Methylated by PrmC. Methylation increases the termination efficiency of RF1.</text>
</comment>
<comment type="similarity">
    <text evidence="1">Belongs to the prokaryotic/mitochondrial release factor family.</text>
</comment>
<evidence type="ECO:0000255" key="1">
    <source>
        <dbReference type="HAMAP-Rule" id="MF_00093"/>
    </source>
</evidence>
<feature type="chain" id="PRO_0000177634" description="Peptide chain release factor 1">
    <location>
        <begin position="1"/>
        <end position="370"/>
    </location>
</feature>
<feature type="modified residue" description="N5-methylglutamine" evidence="1">
    <location>
        <position position="239"/>
    </location>
</feature>
<proteinExistence type="inferred from homology"/>
<keyword id="KW-0963">Cytoplasm</keyword>
<keyword id="KW-0488">Methylation</keyword>
<keyword id="KW-0648">Protein biosynthesis</keyword>
<keyword id="KW-1185">Reference proteome</keyword>
<reference key="1">
    <citation type="journal article" date="2003" name="Science">
        <title>A genomic view of the human-Bacteroides thetaiotaomicron symbiosis.</title>
        <authorList>
            <person name="Xu J."/>
            <person name="Bjursell M.K."/>
            <person name="Himrod J."/>
            <person name="Deng S."/>
            <person name="Carmichael L.K."/>
            <person name="Chiang H.C."/>
            <person name="Hooper L.V."/>
            <person name="Gordon J.I."/>
        </authorList>
    </citation>
    <scope>NUCLEOTIDE SEQUENCE [LARGE SCALE GENOMIC DNA]</scope>
    <source>
        <strain>ATCC 29148 / DSM 2079 / JCM 5827 / CCUG 10774 / NCTC 10582 / VPI-5482 / E50</strain>
    </source>
</reference>
<accession>Q8A011</accession>
<dbReference type="EMBL" id="AE015928">
    <property type="protein sequence ID" value="AAO79315.1"/>
    <property type="molecule type" value="Genomic_DNA"/>
</dbReference>
<dbReference type="RefSeq" id="NP_813121.1">
    <property type="nucleotide sequence ID" value="NC_004663.1"/>
</dbReference>
<dbReference type="RefSeq" id="WP_008759884.1">
    <property type="nucleotide sequence ID" value="NZ_UYXG01000012.1"/>
</dbReference>
<dbReference type="SMR" id="Q8A011"/>
<dbReference type="FunCoup" id="Q8A011">
    <property type="interactions" value="472"/>
</dbReference>
<dbReference type="STRING" id="226186.BT_4210"/>
<dbReference type="PaxDb" id="226186-BT_4210"/>
<dbReference type="EnsemblBacteria" id="AAO79315">
    <property type="protein sequence ID" value="AAO79315"/>
    <property type="gene ID" value="BT_4210"/>
</dbReference>
<dbReference type="GeneID" id="60925383"/>
<dbReference type="KEGG" id="bth:BT_4210"/>
<dbReference type="PATRIC" id="fig|226186.12.peg.4277"/>
<dbReference type="eggNOG" id="COG0216">
    <property type="taxonomic scope" value="Bacteria"/>
</dbReference>
<dbReference type="HOGENOM" id="CLU_036856_0_1_10"/>
<dbReference type="InParanoid" id="Q8A011"/>
<dbReference type="OrthoDB" id="9806673at2"/>
<dbReference type="Proteomes" id="UP000001414">
    <property type="component" value="Chromosome"/>
</dbReference>
<dbReference type="GO" id="GO:0005737">
    <property type="term" value="C:cytoplasm"/>
    <property type="evidence" value="ECO:0007669"/>
    <property type="project" value="UniProtKB-SubCell"/>
</dbReference>
<dbReference type="GO" id="GO:0016149">
    <property type="term" value="F:translation release factor activity, codon specific"/>
    <property type="evidence" value="ECO:0007669"/>
    <property type="project" value="UniProtKB-UniRule"/>
</dbReference>
<dbReference type="FunFam" id="3.30.70.1660:FF:000002">
    <property type="entry name" value="Peptide chain release factor 1"/>
    <property type="match status" value="1"/>
</dbReference>
<dbReference type="FunFam" id="3.30.70.1660:FF:000010">
    <property type="entry name" value="Peptide chain release factor 1"/>
    <property type="match status" value="1"/>
</dbReference>
<dbReference type="FunFam" id="3.30.160.20:FF:000040">
    <property type="entry name" value="Peptide chain release factor 2"/>
    <property type="match status" value="1"/>
</dbReference>
<dbReference type="Gene3D" id="3.30.160.20">
    <property type="match status" value="1"/>
</dbReference>
<dbReference type="Gene3D" id="3.30.70.1660">
    <property type="match status" value="2"/>
</dbReference>
<dbReference type="Gene3D" id="6.10.140.1950">
    <property type="match status" value="1"/>
</dbReference>
<dbReference type="HAMAP" id="MF_00093">
    <property type="entry name" value="Rel_fac_1"/>
    <property type="match status" value="1"/>
</dbReference>
<dbReference type="InterPro" id="IPR005139">
    <property type="entry name" value="PCRF"/>
</dbReference>
<dbReference type="InterPro" id="IPR000352">
    <property type="entry name" value="Pep_chain_release_fac_I"/>
</dbReference>
<dbReference type="InterPro" id="IPR045853">
    <property type="entry name" value="Pep_chain_release_fac_I_sf"/>
</dbReference>
<dbReference type="InterPro" id="IPR050057">
    <property type="entry name" value="Prokaryotic/Mito_RF"/>
</dbReference>
<dbReference type="InterPro" id="IPR004373">
    <property type="entry name" value="RF-1"/>
</dbReference>
<dbReference type="NCBIfam" id="TIGR00019">
    <property type="entry name" value="prfA"/>
    <property type="match status" value="1"/>
</dbReference>
<dbReference type="NCBIfam" id="NF001859">
    <property type="entry name" value="PRK00591.1"/>
    <property type="match status" value="1"/>
</dbReference>
<dbReference type="PANTHER" id="PTHR43804">
    <property type="entry name" value="LD18447P"/>
    <property type="match status" value="1"/>
</dbReference>
<dbReference type="PANTHER" id="PTHR43804:SF7">
    <property type="entry name" value="LD18447P"/>
    <property type="match status" value="1"/>
</dbReference>
<dbReference type="Pfam" id="PF03462">
    <property type="entry name" value="PCRF"/>
    <property type="match status" value="1"/>
</dbReference>
<dbReference type="Pfam" id="PF00472">
    <property type="entry name" value="RF-1"/>
    <property type="match status" value="1"/>
</dbReference>
<dbReference type="SMART" id="SM00937">
    <property type="entry name" value="PCRF"/>
    <property type="match status" value="1"/>
</dbReference>
<dbReference type="SUPFAM" id="SSF75620">
    <property type="entry name" value="Release factor"/>
    <property type="match status" value="1"/>
</dbReference>
<dbReference type="PROSITE" id="PS00745">
    <property type="entry name" value="RF_PROK_I"/>
    <property type="match status" value="1"/>
</dbReference>
<gene>
    <name evidence="1" type="primary">prfA</name>
    <name type="ordered locus">BT_4210</name>
</gene>
<protein>
    <recommendedName>
        <fullName evidence="1">Peptide chain release factor 1</fullName>
        <shortName evidence="1">RF-1</shortName>
    </recommendedName>
</protein>
<sequence length="370" mass="41662">MADNSTILEKLDGLVARFEEISTLITDPAVIADQKRYVKLTKEYKDLDDLMKARKEYIQLLGNIEEAKNILSNESDADMREMAKEEMDNSQERLPALEEEIKLMLVPADPQDSKNAILEIRGGAGGDEAAIFAGDLFRMYAKFCETKGWKMEVSNANEGTAGGYKEIVCSVTGDNVYGILKYESGVHRVQRVPATETQGRVHTSAASVAVLPEAEEFDVVINEGEIKWDTFRSGGAGGQNVNKVESGVRLRYIWKNPNTGVAEEILIECTETRDQPKNKERALARLRTFIYDKEHQKYIDDIASKRKTMVSTGDRSAKIRTYNYPQGRITDHRINYTIYNLAAFMDGDIQDCIDHLIVAENAERLKESEL</sequence>